<reference key="1">
    <citation type="journal article" date="2009" name="Microbiology">
        <title>Methylcitrate cycle activation during adaptation of Fusarium solani and Fusarium verticillioides to propionyl-CoA-generating carbon sources.</title>
        <authorList>
            <person name="Domin N."/>
            <person name="Wilson D."/>
            <person name="Brock M."/>
        </authorList>
    </citation>
    <scope>NUCLEOTIDE SEQUENCE [MRNA]</scope>
    <scope>FUNCTION</scope>
    <scope>CATALYTIC ACTIVITY</scope>
    <scope>BIOPHYSICOCHEMICAL PROPERTIES</scope>
    <source>
        <strain>IP2333.95</strain>
    </source>
</reference>
<comment type="function">
    <text evidence="5">Component of the methylcitrate cycle that catalyzes the synthesis of (2S,3S)-2-methylcitrate from propionyl-CoA and oxaloacetate. Plays an important role in detoxification of propionyl-CoA, an inhibitor of both primary and secondary metabolism. Also has citrate synthase activity using as substrates acetyl-CoA and oxaloacetate.</text>
</comment>
<comment type="catalytic activity">
    <reaction evidence="5">
        <text>propanoyl-CoA + oxaloacetate + H2O = (2S,3S)-2-methylcitrate + CoA + H(+)</text>
        <dbReference type="Rhea" id="RHEA:23780"/>
        <dbReference type="ChEBI" id="CHEBI:15377"/>
        <dbReference type="ChEBI" id="CHEBI:15378"/>
        <dbReference type="ChEBI" id="CHEBI:16452"/>
        <dbReference type="ChEBI" id="CHEBI:57287"/>
        <dbReference type="ChEBI" id="CHEBI:57392"/>
        <dbReference type="ChEBI" id="CHEBI:58853"/>
        <dbReference type="EC" id="2.3.3.5"/>
    </reaction>
</comment>
<comment type="catalytic activity">
    <reaction evidence="5">
        <text>oxaloacetate + acetyl-CoA + H2O = citrate + CoA + H(+)</text>
        <dbReference type="Rhea" id="RHEA:16845"/>
        <dbReference type="ChEBI" id="CHEBI:15377"/>
        <dbReference type="ChEBI" id="CHEBI:15378"/>
        <dbReference type="ChEBI" id="CHEBI:16452"/>
        <dbReference type="ChEBI" id="CHEBI:16947"/>
        <dbReference type="ChEBI" id="CHEBI:57287"/>
        <dbReference type="ChEBI" id="CHEBI:57288"/>
        <dbReference type="EC" id="2.3.3.16"/>
    </reaction>
</comment>
<comment type="biophysicochemical properties">
    <kinetics>
        <KM evidence="5">1.88 uM for propionyl-CoA</KM>
        <KM evidence="5">2.71 uM for acetyl-CoA</KM>
        <KM evidence="5">2.81 uM for oxaloacetate (in presence of propionyl-CoA)</KM>
        <KM evidence="5">9.64 uM for propionyl-CoA (in presence of acetyl-CoA)</KM>
    </kinetics>
    <phDependence>
        <text evidence="5">Optimum pH is 8.0-9.0.</text>
    </phDependence>
    <temperatureDependence>
        <text evidence="5">Optimum temperature is 49-54 degrees Celsius.</text>
    </temperatureDependence>
</comment>
<comment type="pathway">
    <text evidence="7">Organic acid metabolism; propanoate degradation.</text>
</comment>
<comment type="subunit">
    <text evidence="1">Homodimer.</text>
</comment>
<comment type="subcellular location">
    <subcellularLocation>
        <location evidence="7">Mitochondrion matrix</location>
    </subcellularLocation>
</comment>
<comment type="similarity">
    <text evidence="7">Belongs to the citrate synthase family.</text>
</comment>
<name>PRPC_GIBMO</name>
<proteinExistence type="evidence at protein level"/>
<protein>
    <recommendedName>
        <fullName evidence="7">2-methylcitrate synthase, mitochondrial</fullName>
        <shortName evidence="6">Methylcitrate synthase</shortName>
        <ecNumber evidence="5">2.3.3.5</ecNumber>
    </recommendedName>
    <alternativeName>
        <fullName evidence="3">(2S,3S)-2-methylcitrate synthase</fullName>
    </alternativeName>
    <alternativeName>
        <fullName evidence="7">Citrate synthase 2</fullName>
        <ecNumber evidence="5">2.3.3.16</ecNumber>
    </alternativeName>
</protein>
<gene>
    <name evidence="6" type="primary">mcsA</name>
</gene>
<sequence length="472" mass="52103">MALNLTSSRRALGSLKPLTRAAFSGVRGYATAEPDLKATLREAIPAKRELLKKVKAHSNKVLGEVKVENTLGGMRGLKAMVWEGSVLDANEGIRFHGRTIKDCQKELPKGKTGTEMLPEAMFWLLLTGQVPSVNQVRTFSRELAEKAQIPEFISKMLDNFPKDLHPMTQFAMAVSALNYESKFAKAYEQGLNKADYWEPTFDDCISLLAKLPTIAAKIYQNAYRGGGALPAEVDLEQDWSYNFAAMLGKGGKENENFQDLLRLYLALHGDHEGGNVSAHATHLVGSALSDPFLSYSAGLQGLAGPLHGLAAQEVLRWIIQMKEAIPANYTEQDVNDYLWSTLNSGRVVPGYGHAVLRKPDPRFEALMDYAAARPEIANDPVFQLVEKNSRIAPEVLKKHGKTKNPYPNVDSSSGVLFHHYGFHETLYYTATFGVSRGLGPLAQLIWDRALGLPIERPKSINLEGILKQVEGQ</sequence>
<keyword id="KW-0012">Acyltransferase</keyword>
<keyword id="KW-0496">Mitochondrion</keyword>
<keyword id="KW-0808">Transferase</keyword>
<keyword id="KW-0809">Transit peptide</keyword>
<dbReference type="EC" id="2.3.3.5" evidence="5"/>
<dbReference type="EC" id="2.3.3.16" evidence="5"/>
<dbReference type="EMBL" id="FN400887">
    <property type="protein sequence ID" value="CAZ64275.1"/>
    <property type="molecule type" value="mRNA"/>
</dbReference>
<dbReference type="SMR" id="C7C436"/>
<dbReference type="OrthoDB" id="8017587at2759"/>
<dbReference type="UniPathway" id="UPA00946"/>
<dbReference type="GO" id="GO:0005759">
    <property type="term" value="C:mitochondrial matrix"/>
    <property type="evidence" value="ECO:0007669"/>
    <property type="project" value="UniProtKB-SubCell"/>
</dbReference>
<dbReference type="GO" id="GO:0050440">
    <property type="term" value="F:2-methylcitrate synthase activity"/>
    <property type="evidence" value="ECO:0007669"/>
    <property type="project" value="UniProtKB-EC"/>
</dbReference>
<dbReference type="GO" id="GO:0004108">
    <property type="term" value="F:citrate (Si)-synthase activity"/>
    <property type="evidence" value="ECO:0007669"/>
    <property type="project" value="InterPro"/>
</dbReference>
<dbReference type="GO" id="GO:0005975">
    <property type="term" value="P:carbohydrate metabolic process"/>
    <property type="evidence" value="ECO:0007669"/>
    <property type="project" value="TreeGrafter"/>
</dbReference>
<dbReference type="GO" id="GO:0006101">
    <property type="term" value="P:citrate metabolic process"/>
    <property type="evidence" value="ECO:0007669"/>
    <property type="project" value="InterPro"/>
</dbReference>
<dbReference type="GO" id="GO:0006099">
    <property type="term" value="P:tricarboxylic acid cycle"/>
    <property type="evidence" value="ECO:0007669"/>
    <property type="project" value="InterPro"/>
</dbReference>
<dbReference type="FunFam" id="1.10.230.10:FF:000001">
    <property type="entry name" value="Citrate synthase"/>
    <property type="match status" value="1"/>
</dbReference>
<dbReference type="FunFam" id="1.10.580.10:FF:000001">
    <property type="entry name" value="Citrate synthase"/>
    <property type="match status" value="1"/>
</dbReference>
<dbReference type="Gene3D" id="1.10.580.10">
    <property type="entry name" value="Citrate Synthase, domain 1"/>
    <property type="match status" value="1"/>
</dbReference>
<dbReference type="Gene3D" id="1.10.230.10">
    <property type="entry name" value="Cytochrome P450-Terp, domain 2"/>
    <property type="match status" value="1"/>
</dbReference>
<dbReference type="InterPro" id="IPR016142">
    <property type="entry name" value="Citrate_synth-like_lrg_a-sub"/>
</dbReference>
<dbReference type="InterPro" id="IPR016143">
    <property type="entry name" value="Citrate_synth-like_sm_a-sub"/>
</dbReference>
<dbReference type="InterPro" id="IPR002020">
    <property type="entry name" value="Citrate_synthase"/>
</dbReference>
<dbReference type="InterPro" id="IPR019810">
    <property type="entry name" value="Citrate_synthase_AS"/>
</dbReference>
<dbReference type="InterPro" id="IPR010109">
    <property type="entry name" value="Citrate_synthase_euk"/>
</dbReference>
<dbReference type="InterPro" id="IPR036969">
    <property type="entry name" value="Citrate_synthase_sf"/>
</dbReference>
<dbReference type="NCBIfam" id="TIGR01793">
    <property type="entry name" value="cit_synth_euk"/>
    <property type="match status" value="1"/>
</dbReference>
<dbReference type="NCBIfam" id="NF007128">
    <property type="entry name" value="PRK09569.1"/>
    <property type="match status" value="1"/>
</dbReference>
<dbReference type="PANTHER" id="PTHR11739">
    <property type="entry name" value="CITRATE SYNTHASE"/>
    <property type="match status" value="1"/>
</dbReference>
<dbReference type="PANTHER" id="PTHR11739:SF15">
    <property type="entry name" value="CITRATE SYNTHASE 3, MITOCHONDRIAL"/>
    <property type="match status" value="1"/>
</dbReference>
<dbReference type="Pfam" id="PF00285">
    <property type="entry name" value="Citrate_synt"/>
    <property type="match status" value="1"/>
</dbReference>
<dbReference type="PRINTS" id="PR00143">
    <property type="entry name" value="CITRTSNTHASE"/>
</dbReference>
<dbReference type="SUPFAM" id="SSF48256">
    <property type="entry name" value="Citrate synthase"/>
    <property type="match status" value="1"/>
</dbReference>
<dbReference type="PROSITE" id="PS00480">
    <property type="entry name" value="CITRATE_SYNTHASE"/>
    <property type="match status" value="1"/>
</dbReference>
<feature type="transit peptide" description="Mitochondrion" evidence="4">
    <location>
        <begin position="1"/>
        <end position="29"/>
    </location>
</feature>
<feature type="chain" id="PRO_5000502076" description="2-methylcitrate synthase, mitochondrial" evidence="4">
    <location>
        <begin position="30"/>
        <end position="472"/>
    </location>
</feature>
<feature type="active site" evidence="2">
    <location>
        <position position="307"/>
    </location>
</feature>
<feature type="active site" evidence="2">
    <location>
        <position position="353"/>
    </location>
</feature>
<feature type="active site" evidence="2">
    <location>
        <position position="410"/>
    </location>
</feature>
<feature type="binding site" description="in chain B" evidence="1">
    <location>
        <position position="75"/>
    </location>
    <ligand>
        <name>CoA</name>
        <dbReference type="ChEBI" id="CHEBI:57287"/>
        <note>ligand shared between homodimeric partners</note>
    </ligand>
</feature>
<feature type="binding site" description="in chain A" evidence="1">
    <location>
        <position position="193"/>
    </location>
    <ligand>
        <name>CoA</name>
        <dbReference type="ChEBI" id="CHEBI:57287"/>
        <note>ligand shared between homodimeric partners</note>
    </ligand>
</feature>
<feature type="binding site" description="in chain A" evidence="1">
    <location>
        <position position="271"/>
    </location>
    <ligand>
        <name>oxaloacetate</name>
        <dbReference type="ChEBI" id="CHEBI:16452"/>
        <note>ligand shared between homodimeric partners</note>
    </ligand>
</feature>
<feature type="binding site" description="in chain B" evidence="1">
    <location>
        <position position="306"/>
    </location>
    <ligand>
        <name>CoA</name>
        <dbReference type="ChEBI" id="CHEBI:57287"/>
        <note>ligand shared between homodimeric partners</note>
    </ligand>
</feature>
<feature type="binding site" description="in chain B" evidence="1">
    <location>
        <position position="348"/>
    </location>
    <ligand>
        <name>CoA</name>
        <dbReference type="ChEBI" id="CHEBI:57287"/>
        <note>ligand shared between homodimeric partners</note>
    </ligand>
</feature>
<feature type="binding site" description="in chain B" evidence="1">
    <location>
        <position position="350"/>
    </location>
    <ligand>
        <name>CoA</name>
        <dbReference type="ChEBI" id="CHEBI:57287"/>
        <note>ligand shared between homodimeric partners</note>
    </ligand>
</feature>
<feature type="binding site" description="in chain B" evidence="1">
    <location>
        <position position="351"/>
    </location>
    <ligand>
        <name>CoA</name>
        <dbReference type="ChEBI" id="CHEBI:57287"/>
        <note>ligand shared between homodimeric partners</note>
    </ligand>
</feature>
<feature type="binding site" description="in chain A" evidence="1">
    <location>
        <position position="353"/>
    </location>
    <ligand>
        <name>oxaloacetate</name>
        <dbReference type="ChEBI" id="CHEBI:16452"/>
        <note>ligand shared between homodimeric partners</note>
    </ligand>
</feature>
<feature type="binding site" description="in chain A" evidence="1">
    <location>
        <position position="362"/>
    </location>
    <ligand>
        <name>oxaloacetate</name>
        <dbReference type="ChEBI" id="CHEBI:16452"/>
        <note>ligand shared between homodimeric partners</note>
    </ligand>
</feature>
<feature type="binding site" description="in chain B" evidence="1">
    <location>
        <position position="402"/>
    </location>
    <ligand>
        <name>CoA</name>
        <dbReference type="ChEBI" id="CHEBI:57287"/>
        <note>ligand shared between homodimeric partners</note>
    </ligand>
</feature>
<feature type="binding site" description="in chain B" evidence="1">
    <location>
        <position position="403"/>
    </location>
    <ligand>
        <name>CoA</name>
        <dbReference type="ChEBI" id="CHEBI:57287"/>
        <note>ligand shared between homodimeric partners</note>
    </ligand>
</feature>
<feature type="binding site" description="in chain B" evidence="1">
    <location>
        <position position="408"/>
    </location>
    <ligand>
        <name>CoA</name>
        <dbReference type="ChEBI" id="CHEBI:57287"/>
        <note>ligand shared between homodimeric partners</note>
    </ligand>
</feature>
<feature type="binding site" description="in chain A" evidence="1">
    <location>
        <position position="436"/>
    </location>
    <ligand>
        <name>oxaloacetate</name>
        <dbReference type="ChEBI" id="CHEBI:16452"/>
        <note>ligand shared between homodimeric partners</note>
    </ligand>
</feature>
<feature type="binding site" description="in chain B" evidence="1">
    <location>
        <position position="456"/>
    </location>
    <ligand>
        <name>oxaloacetate</name>
        <dbReference type="ChEBI" id="CHEBI:16452"/>
        <note>ligand shared between homodimeric partners</note>
    </ligand>
</feature>
<accession>C7C436</accession>
<organism evidence="8">
    <name type="scientific">Gibberella moniliformis</name>
    <name type="common">Maize ear and stalk rot fungus</name>
    <name type="synonym">Fusarium verticillioides</name>
    <dbReference type="NCBI Taxonomy" id="117187"/>
    <lineage>
        <taxon>Eukaryota</taxon>
        <taxon>Fungi</taxon>
        <taxon>Dikarya</taxon>
        <taxon>Ascomycota</taxon>
        <taxon>Pezizomycotina</taxon>
        <taxon>Sordariomycetes</taxon>
        <taxon>Hypocreomycetidae</taxon>
        <taxon>Hypocreales</taxon>
        <taxon>Nectriaceae</taxon>
        <taxon>Fusarium</taxon>
        <taxon>Fusarium fujikuroi species complex</taxon>
    </lineage>
</organism>
<evidence type="ECO:0000250" key="1">
    <source>
        <dbReference type="UniProtKB" id="B0YD89"/>
    </source>
</evidence>
<evidence type="ECO:0000250" key="2">
    <source>
        <dbReference type="UniProtKB" id="O34002"/>
    </source>
</evidence>
<evidence type="ECO:0000250" key="3">
    <source>
        <dbReference type="UniProtKB" id="P31660"/>
    </source>
</evidence>
<evidence type="ECO:0000255" key="4"/>
<evidence type="ECO:0000269" key="5">
    <source>
    </source>
</evidence>
<evidence type="ECO:0000303" key="6">
    <source>
    </source>
</evidence>
<evidence type="ECO:0000305" key="7"/>
<evidence type="ECO:0000312" key="8">
    <source>
        <dbReference type="EMBL" id="CAZ64275.1"/>
    </source>
</evidence>